<accession>Q9ZK54</accession>
<name>YBEY_HELPJ</name>
<reference key="1">
    <citation type="journal article" date="1999" name="Nature">
        <title>Genomic sequence comparison of two unrelated isolates of the human gastric pathogen Helicobacter pylori.</title>
        <authorList>
            <person name="Alm R.A."/>
            <person name="Ling L.-S.L."/>
            <person name="Moir D.T."/>
            <person name="King B.L."/>
            <person name="Brown E.D."/>
            <person name="Doig P.C."/>
            <person name="Smith D.R."/>
            <person name="Noonan B."/>
            <person name="Guild B.C."/>
            <person name="deJonge B.L."/>
            <person name="Carmel G."/>
            <person name="Tummino P.J."/>
            <person name="Caruso A."/>
            <person name="Uria-Nickelsen M."/>
            <person name="Mills D.M."/>
            <person name="Ives C."/>
            <person name="Gibson R."/>
            <person name="Merberg D."/>
            <person name="Mills S.D."/>
            <person name="Jiang Q."/>
            <person name="Taylor D.E."/>
            <person name="Vovis G.F."/>
            <person name="Trust T.J."/>
        </authorList>
    </citation>
    <scope>NUCLEOTIDE SEQUENCE [LARGE SCALE GENOMIC DNA]</scope>
    <source>
        <strain>J99 / ATCC 700824</strain>
    </source>
</reference>
<sequence>MLEIDNQTPLESDFLLLEKIADVLASTQIIELVLVSDETMREINRDLRDCDYATDVLSFPLEAIPHTPLGSVVINAPLAQENALKLGHSLEDEIALLFIHGVLHLLGYDHEKDKGEQRQKEGELIKAFDLPLSLIERTQEC</sequence>
<organism>
    <name type="scientific">Helicobacter pylori (strain J99 / ATCC 700824)</name>
    <name type="common">Campylobacter pylori J99</name>
    <dbReference type="NCBI Taxonomy" id="85963"/>
    <lineage>
        <taxon>Bacteria</taxon>
        <taxon>Pseudomonadati</taxon>
        <taxon>Campylobacterota</taxon>
        <taxon>Epsilonproteobacteria</taxon>
        <taxon>Campylobacterales</taxon>
        <taxon>Helicobacteraceae</taxon>
        <taxon>Helicobacter</taxon>
    </lineage>
</organism>
<gene>
    <name evidence="1" type="primary">ybeY</name>
    <name type="ordered locus">jhp_1087</name>
</gene>
<keyword id="KW-0963">Cytoplasm</keyword>
<keyword id="KW-0255">Endonuclease</keyword>
<keyword id="KW-0378">Hydrolase</keyword>
<keyword id="KW-0479">Metal-binding</keyword>
<keyword id="KW-0540">Nuclease</keyword>
<keyword id="KW-0690">Ribosome biogenesis</keyword>
<keyword id="KW-0698">rRNA processing</keyword>
<keyword id="KW-0862">Zinc</keyword>
<protein>
    <recommendedName>
        <fullName evidence="1">Endoribonuclease YbeY</fullName>
        <ecNumber evidence="1">3.1.-.-</ecNumber>
    </recommendedName>
</protein>
<feature type="chain" id="PRO_0000102466" description="Endoribonuclease YbeY">
    <location>
        <begin position="1"/>
        <end position="141"/>
    </location>
</feature>
<feature type="binding site" evidence="1">
    <location>
        <position position="100"/>
    </location>
    <ligand>
        <name>Zn(2+)</name>
        <dbReference type="ChEBI" id="CHEBI:29105"/>
        <note>catalytic</note>
    </ligand>
</feature>
<feature type="binding site" evidence="1">
    <location>
        <position position="104"/>
    </location>
    <ligand>
        <name>Zn(2+)</name>
        <dbReference type="ChEBI" id="CHEBI:29105"/>
        <note>catalytic</note>
    </ligand>
</feature>
<feature type="binding site" evidence="1">
    <location>
        <position position="110"/>
    </location>
    <ligand>
        <name>Zn(2+)</name>
        <dbReference type="ChEBI" id="CHEBI:29105"/>
        <note>catalytic</note>
    </ligand>
</feature>
<evidence type="ECO:0000255" key="1">
    <source>
        <dbReference type="HAMAP-Rule" id="MF_00009"/>
    </source>
</evidence>
<dbReference type="EC" id="3.1.-.-" evidence="1"/>
<dbReference type="EMBL" id="AE001439">
    <property type="protein sequence ID" value="AAD06669.1"/>
    <property type="molecule type" value="Genomic_DNA"/>
</dbReference>
<dbReference type="PIR" id="G71850">
    <property type="entry name" value="G71850"/>
</dbReference>
<dbReference type="RefSeq" id="WP_000889536.1">
    <property type="nucleotide sequence ID" value="NC_000921.1"/>
</dbReference>
<dbReference type="SMR" id="Q9ZK54"/>
<dbReference type="KEGG" id="hpj:jhp_1087"/>
<dbReference type="PATRIC" id="fig|85963.30.peg.1495"/>
<dbReference type="eggNOG" id="COG0319">
    <property type="taxonomic scope" value="Bacteria"/>
</dbReference>
<dbReference type="Proteomes" id="UP000000804">
    <property type="component" value="Chromosome"/>
</dbReference>
<dbReference type="GO" id="GO:0005737">
    <property type="term" value="C:cytoplasm"/>
    <property type="evidence" value="ECO:0007669"/>
    <property type="project" value="UniProtKB-SubCell"/>
</dbReference>
<dbReference type="GO" id="GO:0004222">
    <property type="term" value="F:metalloendopeptidase activity"/>
    <property type="evidence" value="ECO:0007669"/>
    <property type="project" value="InterPro"/>
</dbReference>
<dbReference type="GO" id="GO:0004521">
    <property type="term" value="F:RNA endonuclease activity"/>
    <property type="evidence" value="ECO:0007669"/>
    <property type="project" value="UniProtKB-UniRule"/>
</dbReference>
<dbReference type="GO" id="GO:0008270">
    <property type="term" value="F:zinc ion binding"/>
    <property type="evidence" value="ECO:0007669"/>
    <property type="project" value="UniProtKB-UniRule"/>
</dbReference>
<dbReference type="GO" id="GO:0006364">
    <property type="term" value="P:rRNA processing"/>
    <property type="evidence" value="ECO:0007669"/>
    <property type="project" value="UniProtKB-UniRule"/>
</dbReference>
<dbReference type="Gene3D" id="3.40.390.30">
    <property type="entry name" value="Metalloproteases ('zincins'), catalytic domain"/>
    <property type="match status" value="1"/>
</dbReference>
<dbReference type="HAMAP" id="MF_00009">
    <property type="entry name" value="Endoribonucl_YbeY"/>
    <property type="match status" value="1"/>
</dbReference>
<dbReference type="InterPro" id="IPR023091">
    <property type="entry name" value="MetalPrtase_cat_dom_sf_prd"/>
</dbReference>
<dbReference type="InterPro" id="IPR002036">
    <property type="entry name" value="YbeY"/>
</dbReference>
<dbReference type="InterPro" id="IPR020549">
    <property type="entry name" value="YbeY_CS"/>
</dbReference>
<dbReference type="NCBIfam" id="TIGR00043">
    <property type="entry name" value="rRNA maturation RNase YbeY"/>
    <property type="match status" value="1"/>
</dbReference>
<dbReference type="PANTHER" id="PTHR46986">
    <property type="entry name" value="ENDORIBONUCLEASE YBEY, CHLOROPLASTIC"/>
    <property type="match status" value="1"/>
</dbReference>
<dbReference type="PANTHER" id="PTHR46986:SF1">
    <property type="entry name" value="ENDORIBONUCLEASE YBEY, CHLOROPLASTIC"/>
    <property type="match status" value="1"/>
</dbReference>
<dbReference type="Pfam" id="PF02130">
    <property type="entry name" value="YbeY"/>
    <property type="match status" value="1"/>
</dbReference>
<dbReference type="SUPFAM" id="SSF55486">
    <property type="entry name" value="Metalloproteases ('zincins'), catalytic domain"/>
    <property type="match status" value="1"/>
</dbReference>
<dbReference type="PROSITE" id="PS01306">
    <property type="entry name" value="UPF0054"/>
    <property type="match status" value="1"/>
</dbReference>
<comment type="function">
    <text evidence="1">Single strand-specific metallo-endoribonuclease involved in late-stage 70S ribosome quality control and in maturation of the 3' terminus of the 16S rRNA.</text>
</comment>
<comment type="cofactor">
    <cofactor evidence="1">
        <name>Zn(2+)</name>
        <dbReference type="ChEBI" id="CHEBI:29105"/>
    </cofactor>
    <text evidence="1">Binds 1 zinc ion.</text>
</comment>
<comment type="subcellular location">
    <subcellularLocation>
        <location evidence="1">Cytoplasm</location>
    </subcellularLocation>
</comment>
<comment type="similarity">
    <text evidence="1">Belongs to the endoribonuclease YbeY family.</text>
</comment>
<proteinExistence type="inferred from homology"/>